<reference key="1">
    <citation type="submission" date="2004-07" db="EMBL/GenBank/DDBJ databases">
        <title>Expression analysis of endothelin receptor type B gene in canine atopic dermatitis.</title>
        <authorList>
            <person name="Tsukui T."/>
            <person name="Yasuda N."/>
            <person name="Maeda S."/>
            <person name="Koyanagi M."/>
            <person name="Hashimoto R."/>
            <person name="Masuda K."/>
            <person name="Ohno K."/>
            <person name="Sakaguchi M."/>
            <person name="Tsujimoto H."/>
            <person name="Iwabuchi S."/>
        </authorList>
    </citation>
    <scope>NUCLEOTIDE SEQUENCE [MRNA]</scope>
</reference>
<reference key="2">
    <citation type="submission" date="1998-07" db="EMBL/GenBank/DDBJ databases">
        <authorList>
            <person name="Zemke D."/>
            <person name="Yuzbasiyan-Gurkan V."/>
        </authorList>
    </citation>
    <scope>NUCLEOTIDE SEQUENCE [MRNA] OF 1-426</scope>
</reference>
<sequence length="442" mass="49722">MQPPPSLCGRALVALVLACGLSRIWGEERGFPPDRATPLLQTAEIMTPPTKTLWPKGSNASLARSLAPAEVPKGDRTAGSPPRTISPPPCEGSIEIKETFKYINTVVSCLVFVLGIIGNSTLLRIIYKNKCMRNGPNILIASLALGDLLHIIIDIPITVYKLLAEDWPFGVEMCKLVPFIQKASVGITVLSLCALSIDRYRAVASWSRIKGIGVPKWTAVEIVLIWVVSVVLAVPEAVGFDMITIDYKGRYLRICLLHPTQKTAFMQFYKTAKDWWLFSFYFCLPLAITAFFYTLMTCEMLRKKSGMQIALNDHLKQRREVAKTVFCLVLVFALCWLPLHLSRILKLTIYDQNDPNRCELLSFLLVLDYIGINMASLNSCINPIALYLVSKRFKNCFKSCLCCWCQSFEEKQSLEEKQSCLKFKANDHGYDNFRSSNKYSSS</sequence>
<comment type="function">
    <text>Non-specific receptor for endothelin 1, 2, and 3. Mediates its action by association with G proteins that activate a phosphatidylinositol-calcium second messenger system.</text>
</comment>
<comment type="subcellular location">
    <subcellularLocation>
        <location evidence="1">Cell membrane</location>
        <topology>Multi-pass membrane protein</topology>
    </subcellularLocation>
    <text evidence="1">internalized after activation by endothelins.</text>
</comment>
<comment type="similarity">
    <text evidence="4">Belongs to the G-protein coupled receptor 1 family. Endothelin receptor subfamily. EDNRB sub-subfamily.</text>
</comment>
<gene>
    <name type="primary">EDNRB</name>
</gene>
<accession>P56497</accession>
<accession>Q5KSU8</accession>
<dbReference type="EMBL" id="AB183285">
    <property type="protein sequence ID" value="BAD83850.1"/>
    <property type="molecule type" value="mRNA"/>
</dbReference>
<dbReference type="EMBL" id="AF034530">
    <property type="protein sequence ID" value="AAC26970.1"/>
    <property type="molecule type" value="mRNA"/>
</dbReference>
<dbReference type="RefSeq" id="NP_001010943.2">
    <property type="nucleotide sequence ID" value="NM_001010943.2"/>
</dbReference>
<dbReference type="SMR" id="P56497"/>
<dbReference type="FunCoup" id="P56497">
    <property type="interactions" value="263"/>
</dbReference>
<dbReference type="STRING" id="9615.ENSCAFP00000007760"/>
<dbReference type="GlyCosmos" id="P56497">
    <property type="glycosylation" value="1 site, No reported glycans"/>
</dbReference>
<dbReference type="PaxDb" id="9612-ENSCAFP00000007760"/>
<dbReference type="GeneID" id="403862"/>
<dbReference type="KEGG" id="cfa:403862"/>
<dbReference type="CTD" id="1910"/>
<dbReference type="eggNOG" id="KOG3656">
    <property type="taxonomic scope" value="Eukaryota"/>
</dbReference>
<dbReference type="InParanoid" id="P56497"/>
<dbReference type="OrthoDB" id="10037617at2759"/>
<dbReference type="Proteomes" id="UP000002254">
    <property type="component" value="Unplaced"/>
</dbReference>
<dbReference type="Proteomes" id="UP000694429">
    <property type="component" value="Unplaced"/>
</dbReference>
<dbReference type="Proteomes" id="UP000694542">
    <property type="component" value="Unplaced"/>
</dbReference>
<dbReference type="Proteomes" id="UP000805418">
    <property type="component" value="Unplaced"/>
</dbReference>
<dbReference type="GO" id="GO:0005886">
    <property type="term" value="C:plasma membrane"/>
    <property type="evidence" value="ECO:0000250"/>
    <property type="project" value="UniProtKB"/>
</dbReference>
<dbReference type="GO" id="GO:0004962">
    <property type="term" value="F:endothelin receptor activity"/>
    <property type="evidence" value="ECO:0000250"/>
    <property type="project" value="UniProtKB"/>
</dbReference>
<dbReference type="GO" id="GO:0019722">
    <property type="term" value="P:calcium-mediated signaling"/>
    <property type="evidence" value="ECO:0000250"/>
    <property type="project" value="UniProtKB"/>
</dbReference>
<dbReference type="GO" id="GO:0048066">
    <property type="term" value="P:developmental pigmentation"/>
    <property type="evidence" value="ECO:0000318"/>
    <property type="project" value="GO_Central"/>
</dbReference>
<dbReference type="GO" id="GO:0086100">
    <property type="term" value="P:endothelin receptor signaling pathway"/>
    <property type="evidence" value="ECO:0000250"/>
    <property type="project" value="UniProtKB"/>
</dbReference>
<dbReference type="GO" id="GO:0048484">
    <property type="term" value="P:enteric nervous system development"/>
    <property type="evidence" value="ECO:0007669"/>
    <property type="project" value="InterPro"/>
</dbReference>
<dbReference type="GO" id="GO:0008217">
    <property type="term" value="P:regulation of blood pressure"/>
    <property type="evidence" value="ECO:0007669"/>
    <property type="project" value="InterPro"/>
</dbReference>
<dbReference type="GO" id="GO:0042310">
    <property type="term" value="P:vasoconstriction"/>
    <property type="evidence" value="ECO:0000318"/>
    <property type="project" value="GO_Central"/>
</dbReference>
<dbReference type="CDD" id="cd15976">
    <property type="entry name" value="7tmA_ET-BR"/>
    <property type="match status" value="1"/>
</dbReference>
<dbReference type="FunFam" id="1.20.1070.10:FF:000076">
    <property type="entry name" value="Endothelin receptor type B"/>
    <property type="match status" value="1"/>
</dbReference>
<dbReference type="Gene3D" id="1.20.1070.10">
    <property type="entry name" value="Rhodopsin 7-helix transmembrane proteins"/>
    <property type="match status" value="1"/>
</dbReference>
<dbReference type="InterPro" id="IPR000499">
    <property type="entry name" value="Endthln_rcpt"/>
</dbReference>
<dbReference type="InterPro" id="IPR001112">
    <property type="entry name" value="ETB_rcpt"/>
</dbReference>
<dbReference type="InterPro" id="IPR051193">
    <property type="entry name" value="GPCR_endothelin_rcpt"/>
</dbReference>
<dbReference type="InterPro" id="IPR000276">
    <property type="entry name" value="GPCR_Rhodpsn"/>
</dbReference>
<dbReference type="InterPro" id="IPR017452">
    <property type="entry name" value="GPCR_Rhodpsn_7TM"/>
</dbReference>
<dbReference type="PANTHER" id="PTHR46099:SF3">
    <property type="entry name" value="ENDOTHELIN RECEPTOR TYPE B"/>
    <property type="match status" value="1"/>
</dbReference>
<dbReference type="PANTHER" id="PTHR46099">
    <property type="entry name" value="G_PROTEIN_RECEP_F1_2 DOMAIN-CONTAINING PROTEIN"/>
    <property type="match status" value="1"/>
</dbReference>
<dbReference type="Pfam" id="PF00001">
    <property type="entry name" value="7tm_1"/>
    <property type="match status" value="1"/>
</dbReference>
<dbReference type="PRINTS" id="PR00571">
    <property type="entry name" value="ENDOTHELINBR"/>
</dbReference>
<dbReference type="PRINTS" id="PR00366">
    <property type="entry name" value="ENDOTHELINR"/>
</dbReference>
<dbReference type="PRINTS" id="PR00237">
    <property type="entry name" value="GPCRRHODOPSN"/>
</dbReference>
<dbReference type="SMART" id="SM01381">
    <property type="entry name" value="7TM_GPCR_Srsx"/>
    <property type="match status" value="1"/>
</dbReference>
<dbReference type="SUPFAM" id="SSF81321">
    <property type="entry name" value="Family A G protein-coupled receptor-like"/>
    <property type="match status" value="1"/>
</dbReference>
<dbReference type="PROSITE" id="PS00237">
    <property type="entry name" value="G_PROTEIN_RECEP_F1_1"/>
    <property type="match status" value="1"/>
</dbReference>
<dbReference type="PROSITE" id="PS50262">
    <property type="entry name" value="G_PROTEIN_RECEP_F1_2"/>
    <property type="match status" value="1"/>
</dbReference>
<name>EDNRB_CANLF</name>
<feature type="signal peptide" evidence="3">
    <location>
        <begin position="1"/>
        <end position="26"/>
    </location>
</feature>
<feature type="chain" id="PRO_0000012727" description="Endothelin receptor type B">
    <location>
        <begin position="27"/>
        <end position="442"/>
    </location>
</feature>
<feature type="topological domain" description="Extracellular" evidence="3">
    <location>
        <begin position="27"/>
        <end position="101"/>
    </location>
</feature>
<feature type="transmembrane region" description="Helical; Name=1" evidence="3">
    <location>
        <begin position="102"/>
        <end position="126"/>
    </location>
</feature>
<feature type="topological domain" description="Cytoplasmic" evidence="3">
    <location>
        <begin position="127"/>
        <end position="137"/>
    </location>
</feature>
<feature type="transmembrane region" description="Helical; Name=2" evidence="3">
    <location>
        <begin position="138"/>
        <end position="163"/>
    </location>
</feature>
<feature type="topological domain" description="Extracellular" evidence="3">
    <location>
        <begin position="164"/>
        <end position="175"/>
    </location>
</feature>
<feature type="transmembrane region" description="Helical; Name=3" evidence="3">
    <location>
        <begin position="176"/>
        <end position="197"/>
    </location>
</feature>
<feature type="topological domain" description="Cytoplasmic" evidence="3">
    <location>
        <begin position="198"/>
        <end position="218"/>
    </location>
</feature>
<feature type="transmembrane region" description="Helical; Name=4" evidence="3">
    <location>
        <begin position="219"/>
        <end position="243"/>
    </location>
</feature>
<feature type="topological domain" description="Extracellular" evidence="3">
    <location>
        <begin position="244"/>
        <end position="271"/>
    </location>
</feature>
<feature type="transmembrane region" description="Helical; Name=5" evidence="3">
    <location>
        <begin position="272"/>
        <end position="296"/>
    </location>
</feature>
<feature type="topological domain" description="Cytoplasmic" evidence="3">
    <location>
        <begin position="297"/>
        <end position="324"/>
    </location>
</feature>
<feature type="transmembrane region" description="Helical; Name=6" evidence="3">
    <location>
        <begin position="325"/>
        <end position="350"/>
    </location>
</feature>
<feature type="topological domain" description="Extracellular" evidence="3">
    <location>
        <begin position="351"/>
        <end position="362"/>
    </location>
</feature>
<feature type="transmembrane region" description="Helical; Name=7" evidence="3">
    <location>
        <begin position="363"/>
        <end position="389"/>
    </location>
</feature>
<feature type="topological domain" description="Cytoplasmic" evidence="3">
    <location>
        <begin position="390"/>
        <end position="442"/>
    </location>
</feature>
<feature type="region of interest" description="Disordered" evidence="5">
    <location>
        <begin position="69"/>
        <end position="88"/>
    </location>
</feature>
<feature type="modified residue" description="Phosphoserine" evidence="2">
    <location>
        <position position="305"/>
    </location>
</feature>
<feature type="modified residue" description="Phosphoserine" evidence="2">
    <location>
        <position position="419"/>
    </location>
</feature>
<feature type="modified residue" description="Phosphotyrosine" evidence="2">
    <location>
        <position position="439"/>
    </location>
</feature>
<feature type="modified residue" description="Phosphoserine" evidence="2">
    <location>
        <position position="440"/>
    </location>
</feature>
<feature type="modified residue" description="Phosphoserine" evidence="2">
    <location>
        <position position="441"/>
    </location>
</feature>
<feature type="modified residue" description="Phosphoserine" evidence="2">
    <location>
        <position position="442"/>
    </location>
</feature>
<feature type="lipid moiety-binding region" description="S-palmitoyl cysteine" evidence="3">
    <location>
        <position position="402"/>
    </location>
</feature>
<feature type="lipid moiety-binding region" description="S-palmitoyl cysteine" evidence="3">
    <location>
        <position position="403"/>
    </location>
</feature>
<feature type="lipid moiety-binding region" description="S-palmitoyl cysteine" evidence="3">
    <location>
        <position position="405"/>
    </location>
</feature>
<feature type="glycosylation site" description="N-linked (GlcNAc...) asparagine" evidence="3">
    <location>
        <position position="59"/>
    </location>
</feature>
<feature type="disulfide bond" evidence="4">
    <location>
        <begin position="174"/>
        <end position="255"/>
    </location>
</feature>
<organism>
    <name type="scientific">Canis lupus familiaris</name>
    <name type="common">Dog</name>
    <name type="synonym">Canis familiaris</name>
    <dbReference type="NCBI Taxonomy" id="9615"/>
    <lineage>
        <taxon>Eukaryota</taxon>
        <taxon>Metazoa</taxon>
        <taxon>Chordata</taxon>
        <taxon>Craniata</taxon>
        <taxon>Vertebrata</taxon>
        <taxon>Euteleostomi</taxon>
        <taxon>Mammalia</taxon>
        <taxon>Eutheria</taxon>
        <taxon>Laurasiatheria</taxon>
        <taxon>Carnivora</taxon>
        <taxon>Caniformia</taxon>
        <taxon>Canidae</taxon>
        <taxon>Canis</taxon>
    </lineage>
</organism>
<proteinExistence type="evidence at transcript level"/>
<protein>
    <recommendedName>
        <fullName evidence="6">Endothelin receptor type B</fullName>
        <shortName>ET-B</shortName>
        <shortName>ET-BR</shortName>
    </recommendedName>
    <alternativeName>
        <fullName>Endothelin receptor non-selective type</fullName>
    </alternativeName>
</protein>
<keyword id="KW-1003">Cell membrane</keyword>
<keyword id="KW-1015">Disulfide bond</keyword>
<keyword id="KW-0297">G-protein coupled receptor</keyword>
<keyword id="KW-0325">Glycoprotein</keyword>
<keyword id="KW-0449">Lipoprotein</keyword>
<keyword id="KW-0472">Membrane</keyword>
<keyword id="KW-0564">Palmitate</keyword>
<keyword id="KW-0597">Phosphoprotein</keyword>
<keyword id="KW-0675">Receptor</keyword>
<keyword id="KW-1185">Reference proteome</keyword>
<keyword id="KW-0732">Signal</keyword>
<keyword id="KW-0807">Transducer</keyword>
<keyword id="KW-0812">Transmembrane</keyword>
<keyword id="KW-1133">Transmembrane helix</keyword>
<evidence type="ECO:0000250" key="1">
    <source>
        <dbReference type="UniProtKB" id="P24530"/>
    </source>
</evidence>
<evidence type="ECO:0000250" key="2">
    <source>
        <dbReference type="UniProtKB" id="P28088"/>
    </source>
</evidence>
<evidence type="ECO:0000255" key="3"/>
<evidence type="ECO:0000255" key="4">
    <source>
        <dbReference type="PROSITE-ProRule" id="PRU00521"/>
    </source>
</evidence>
<evidence type="ECO:0000256" key="5">
    <source>
        <dbReference type="SAM" id="MobiDB-lite"/>
    </source>
</evidence>
<evidence type="ECO:0000305" key="6"/>